<evidence type="ECO:0000250" key="1"/>
<evidence type="ECO:0000250" key="2">
    <source>
        <dbReference type="UniProtKB" id="P56181"/>
    </source>
</evidence>
<evidence type="ECO:0000256" key="3">
    <source>
        <dbReference type="SAM" id="MobiDB-lite"/>
    </source>
</evidence>
<evidence type="ECO:0000305" key="4"/>
<reference key="1">
    <citation type="journal article" date="2006" name="Gene">
        <title>Adaptive selection of mitochondrial complex I subunits during primate radiation.</title>
        <authorList>
            <person name="Mishmar D."/>
            <person name="Ruiz-Pesini E."/>
            <person name="Mondragon-Palomino M."/>
            <person name="Procaccio V."/>
            <person name="Gaut B."/>
            <person name="Wallace D.C."/>
        </authorList>
    </citation>
    <scope>NUCLEOTIDE SEQUENCE [MRNA]</scope>
</reference>
<organism>
    <name type="scientific">Pan troglodytes</name>
    <name type="common">Chimpanzee</name>
    <dbReference type="NCBI Taxonomy" id="9598"/>
    <lineage>
        <taxon>Eukaryota</taxon>
        <taxon>Metazoa</taxon>
        <taxon>Chordata</taxon>
        <taxon>Craniata</taxon>
        <taxon>Vertebrata</taxon>
        <taxon>Euteleostomi</taxon>
        <taxon>Mammalia</taxon>
        <taxon>Eutheria</taxon>
        <taxon>Euarchontoglires</taxon>
        <taxon>Primates</taxon>
        <taxon>Haplorrhini</taxon>
        <taxon>Catarrhini</taxon>
        <taxon>Hominidae</taxon>
        <taxon>Pan</taxon>
    </lineage>
</organism>
<keyword id="KW-0249">Electron transport</keyword>
<keyword id="KW-0472">Membrane</keyword>
<keyword id="KW-0496">Mitochondrion</keyword>
<keyword id="KW-0999">Mitochondrion inner membrane</keyword>
<keyword id="KW-0597">Phosphoprotein</keyword>
<keyword id="KW-1185">Reference proteome</keyword>
<keyword id="KW-0679">Respiratory chain</keyword>
<keyword id="KW-0809">Transit peptide</keyword>
<keyword id="KW-0813">Transport</keyword>
<name>NDUV3_PANTR</name>
<gene>
    <name type="primary">NDUFV3</name>
</gene>
<proteinExistence type="inferred from homology"/>
<protein>
    <recommendedName>
        <fullName>NADH dehydrogenase [ubiquinone] flavoprotein 3, mitochondrial</fullName>
    </recommendedName>
    <alternativeName>
        <fullName>Complex I-9kD</fullName>
        <shortName>CI-9kD</shortName>
    </alternativeName>
    <alternativeName>
        <fullName>NADH-ubiquinone oxidoreductase 9 kDa subunit</fullName>
    </alternativeName>
</protein>
<sequence>MAAPCLLRQGRAGALKTMLQEAQVFRGLASTVSLSAESGKSEKGQPQNSKKQSPPKKPAPVPAEPFDNTTYKNLQHHDYSTYTFLDLNLELSKFRMPQPSSGRESPRH</sequence>
<feature type="transit peptide" description="Mitochondrion" evidence="1">
    <location>
        <begin position="1"/>
        <end position="34"/>
    </location>
</feature>
<feature type="chain" id="PRO_0000251884" description="NADH dehydrogenase [ubiquinone] flavoprotein 3, mitochondrial">
    <location>
        <begin position="35"/>
        <end position="108"/>
    </location>
</feature>
<feature type="region of interest" description="Disordered" evidence="3">
    <location>
        <begin position="33"/>
        <end position="72"/>
    </location>
</feature>
<feature type="modified residue" description="Phosphoserine" evidence="2">
    <location>
        <position position="105"/>
    </location>
</feature>
<comment type="function">
    <text evidence="2">Accessory subunit of the mitochondrial membrane respiratory chain NADH dehydrogenase (Complex I), that is believed not to be involved in catalysis. Complex I functions in the transfer of electrons from NADH to the respiratory chain. The immediate electron acceptor for the enzyme is believed to be ubiquinone. May be the terminally assembled subunit of Complex I.</text>
</comment>
<comment type="subunit">
    <text evidence="2">Complex I is composed of 45 different subunits. This is a component of the flavoprotein-sulfur (FP) fragment of the enzyme.</text>
</comment>
<comment type="subcellular location">
    <subcellularLocation>
        <location evidence="2">Mitochondrion inner membrane</location>
        <topology evidence="2">Peripheral membrane protein</topology>
        <orientation evidence="2">Matrix side</orientation>
    </subcellularLocation>
</comment>
<comment type="similarity">
    <text evidence="4">Belongs to the complex I NDUFV3 subunit family.</text>
</comment>
<dbReference type="EMBL" id="DQ885642">
    <property type="protein sequence ID" value="ABH12151.1"/>
    <property type="molecule type" value="mRNA"/>
</dbReference>
<dbReference type="RefSeq" id="NP_001065281.1">
    <property type="nucleotide sequence ID" value="NM_001071813.1"/>
</dbReference>
<dbReference type="SMR" id="Q0MQJ2"/>
<dbReference type="FunCoup" id="Q0MQJ2">
    <property type="interactions" value="794"/>
</dbReference>
<dbReference type="STRING" id="9598.ENSPTRP00000088731"/>
<dbReference type="PaxDb" id="9598-ENSPTRP00000024009"/>
<dbReference type="Ensembl" id="ENSPTRT00000094238.1">
    <property type="protein sequence ID" value="ENSPTRP00000072302.1"/>
    <property type="gene ID" value="ENSPTRG00000047245.1"/>
</dbReference>
<dbReference type="GeneID" id="736470"/>
<dbReference type="KEGG" id="ptr:736470"/>
<dbReference type="CTD" id="4731"/>
<dbReference type="VGNC" id="VGNC:58099">
    <property type="gene designation" value="NDUFV3"/>
</dbReference>
<dbReference type="eggNOG" id="ENOG502S46A">
    <property type="taxonomic scope" value="Eukaryota"/>
</dbReference>
<dbReference type="GeneTree" id="ENSGT00390000012196"/>
<dbReference type="HOGENOM" id="CLU_2157565_0_0_1"/>
<dbReference type="InParanoid" id="Q0MQJ2"/>
<dbReference type="TreeFam" id="TF314773"/>
<dbReference type="Proteomes" id="UP000002277">
    <property type="component" value="Chromosome 21"/>
</dbReference>
<dbReference type="Bgee" id="ENSPTRG00000047245">
    <property type="expression patterns" value="Expressed in hindlimb stylopod muscle and 21 other cell types or tissues"/>
</dbReference>
<dbReference type="GO" id="GO:0005743">
    <property type="term" value="C:mitochondrial inner membrane"/>
    <property type="evidence" value="ECO:0007669"/>
    <property type="project" value="UniProtKB-SubCell"/>
</dbReference>
<dbReference type="GO" id="GO:0045271">
    <property type="term" value="C:respiratory chain complex I"/>
    <property type="evidence" value="ECO:0000250"/>
    <property type="project" value="UniProtKB"/>
</dbReference>
<dbReference type="GO" id="GO:0042775">
    <property type="term" value="P:mitochondrial ATP synthesis coupled electron transport"/>
    <property type="evidence" value="ECO:0000318"/>
    <property type="project" value="GO_Central"/>
</dbReference>
<dbReference type="InterPro" id="IPR026193">
    <property type="entry name" value="NDUFV3"/>
</dbReference>
<dbReference type="PANTHER" id="PTHR17117:SF1">
    <property type="entry name" value="NADH DEHYDROGENASE [UBIQUINONE] FLAVOPROTEIN 3, MITOCHONDRIAL"/>
    <property type="match status" value="1"/>
</dbReference>
<dbReference type="PANTHER" id="PTHR17117">
    <property type="entry name" value="NADH-UBIQUINONE OXIDOREDUCTASE"/>
    <property type="match status" value="1"/>
</dbReference>
<dbReference type="Pfam" id="PF15880">
    <property type="entry name" value="NDUFV3"/>
    <property type="match status" value="1"/>
</dbReference>
<accession>Q0MQJ2</accession>